<organism>
    <name type="scientific">Pseudomonas fluorescens (strain SBW25)</name>
    <dbReference type="NCBI Taxonomy" id="216595"/>
    <lineage>
        <taxon>Bacteria</taxon>
        <taxon>Pseudomonadati</taxon>
        <taxon>Pseudomonadota</taxon>
        <taxon>Gammaproteobacteria</taxon>
        <taxon>Pseudomonadales</taxon>
        <taxon>Pseudomonadaceae</taxon>
        <taxon>Pseudomonas</taxon>
    </lineage>
</organism>
<name>RBFA_PSEFS</name>
<sequence length="131" mass="14706">MAKEYSRTQRIGDQMQRELAQLIRREVKDPRVGLVTITAVEVSRDVGHAKIFITVMGQDSAEEIAQSIKVLNAAAGFLRMQLAREMKLRSVPQLHFHYDESVVRGAHLSALIERAVAEDSQHPSTPEDAKE</sequence>
<evidence type="ECO:0000255" key="1">
    <source>
        <dbReference type="HAMAP-Rule" id="MF_00003"/>
    </source>
</evidence>
<feature type="chain" id="PRO_1000201648" description="Ribosome-binding factor A">
    <location>
        <begin position="1"/>
        <end position="131"/>
    </location>
</feature>
<gene>
    <name evidence="1" type="primary">rbfA</name>
    <name type="ordered locus">PFLU_5252</name>
</gene>
<comment type="function">
    <text evidence="1">One of several proteins that assist in the late maturation steps of the functional core of the 30S ribosomal subunit. Associates with free 30S ribosomal subunits (but not with 30S subunits that are part of 70S ribosomes or polysomes). Required for efficient processing of 16S rRNA. May interact with the 5'-terminal helix region of 16S rRNA.</text>
</comment>
<comment type="subunit">
    <text evidence="1">Monomer. Binds 30S ribosomal subunits, but not 50S ribosomal subunits or 70S ribosomes.</text>
</comment>
<comment type="subcellular location">
    <subcellularLocation>
        <location evidence="1">Cytoplasm</location>
    </subcellularLocation>
</comment>
<comment type="similarity">
    <text evidence="1">Belongs to the RbfA family.</text>
</comment>
<proteinExistence type="inferred from homology"/>
<reference key="1">
    <citation type="journal article" date="2009" name="Genome Biol.">
        <title>Genomic and genetic analyses of diversity and plant interactions of Pseudomonas fluorescens.</title>
        <authorList>
            <person name="Silby M.W."/>
            <person name="Cerdeno-Tarraga A.M."/>
            <person name="Vernikos G.S."/>
            <person name="Giddens S.R."/>
            <person name="Jackson R.W."/>
            <person name="Preston G.M."/>
            <person name="Zhang X.-X."/>
            <person name="Moon C.D."/>
            <person name="Gehrig S.M."/>
            <person name="Godfrey S.A.C."/>
            <person name="Knight C.G."/>
            <person name="Malone J.G."/>
            <person name="Robinson Z."/>
            <person name="Spiers A.J."/>
            <person name="Harris S."/>
            <person name="Challis G.L."/>
            <person name="Yaxley A.M."/>
            <person name="Harris D."/>
            <person name="Seeger K."/>
            <person name="Murphy L."/>
            <person name="Rutter S."/>
            <person name="Squares R."/>
            <person name="Quail M.A."/>
            <person name="Saunders E."/>
            <person name="Mavromatis K."/>
            <person name="Brettin T.S."/>
            <person name="Bentley S.D."/>
            <person name="Hothersall J."/>
            <person name="Stephens E."/>
            <person name="Thomas C.M."/>
            <person name="Parkhill J."/>
            <person name="Levy S.B."/>
            <person name="Rainey P.B."/>
            <person name="Thomson N.R."/>
        </authorList>
    </citation>
    <scope>NUCLEOTIDE SEQUENCE [LARGE SCALE GENOMIC DNA]</scope>
    <source>
        <strain>SBW25</strain>
    </source>
</reference>
<dbReference type="EMBL" id="AM181176">
    <property type="protein sequence ID" value="CAY52349.1"/>
    <property type="molecule type" value="Genomic_DNA"/>
</dbReference>
<dbReference type="RefSeq" id="WP_015885917.1">
    <property type="nucleotide sequence ID" value="NC_012660.1"/>
</dbReference>
<dbReference type="SMR" id="C3K258"/>
<dbReference type="STRING" id="294.SRM1_00827"/>
<dbReference type="GeneID" id="93466881"/>
<dbReference type="eggNOG" id="COG0858">
    <property type="taxonomic scope" value="Bacteria"/>
</dbReference>
<dbReference type="HOGENOM" id="CLU_089475_5_0_6"/>
<dbReference type="OrthoDB" id="307788at2"/>
<dbReference type="GO" id="GO:0005829">
    <property type="term" value="C:cytosol"/>
    <property type="evidence" value="ECO:0007669"/>
    <property type="project" value="TreeGrafter"/>
</dbReference>
<dbReference type="GO" id="GO:0043024">
    <property type="term" value="F:ribosomal small subunit binding"/>
    <property type="evidence" value="ECO:0007669"/>
    <property type="project" value="TreeGrafter"/>
</dbReference>
<dbReference type="GO" id="GO:0030490">
    <property type="term" value="P:maturation of SSU-rRNA"/>
    <property type="evidence" value="ECO:0007669"/>
    <property type="project" value="UniProtKB-UniRule"/>
</dbReference>
<dbReference type="Gene3D" id="3.30.300.20">
    <property type="match status" value="1"/>
</dbReference>
<dbReference type="HAMAP" id="MF_00003">
    <property type="entry name" value="RbfA"/>
    <property type="match status" value="1"/>
</dbReference>
<dbReference type="InterPro" id="IPR015946">
    <property type="entry name" value="KH_dom-like_a/b"/>
</dbReference>
<dbReference type="InterPro" id="IPR000238">
    <property type="entry name" value="RbfA"/>
</dbReference>
<dbReference type="InterPro" id="IPR023799">
    <property type="entry name" value="RbfA_dom_sf"/>
</dbReference>
<dbReference type="InterPro" id="IPR020053">
    <property type="entry name" value="Ribosome-bd_factorA_CS"/>
</dbReference>
<dbReference type="NCBIfam" id="TIGR00082">
    <property type="entry name" value="rbfA"/>
    <property type="match status" value="1"/>
</dbReference>
<dbReference type="PANTHER" id="PTHR33515">
    <property type="entry name" value="RIBOSOME-BINDING FACTOR A, CHLOROPLASTIC-RELATED"/>
    <property type="match status" value="1"/>
</dbReference>
<dbReference type="PANTHER" id="PTHR33515:SF1">
    <property type="entry name" value="RIBOSOME-BINDING FACTOR A, CHLOROPLASTIC-RELATED"/>
    <property type="match status" value="1"/>
</dbReference>
<dbReference type="Pfam" id="PF02033">
    <property type="entry name" value="RBFA"/>
    <property type="match status" value="1"/>
</dbReference>
<dbReference type="SUPFAM" id="SSF89919">
    <property type="entry name" value="Ribosome-binding factor A, RbfA"/>
    <property type="match status" value="1"/>
</dbReference>
<dbReference type="PROSITE" id="PS01319">
    <property type="entry name" value="RBFA"/>
    <property type="match status" value="1"/>
</dbReference>
<accession>C3K258</accession>
<protein>
    <recommendedName>
        <fullName evidence="1">Ribosome-binding factor A</fullName>
    </recommendedName>
</protein>
<keyword id="KW-0963">Cytoplasm</keyword>
<keyword id="KW-0690">Ribosome biogenesis</keyword>